<feature type="chain" id="PRO_0000386365" description="GTPase Obg">
    <location>
        <begin position="1"/>
        <end position="382"/>
    </location>
</feature>
<feature type="domain" description="Obg" evidence="2">
    <location>
        <begin position="2"/>
        <end position="161"/>
    </location>
</feature>
<feature type="domain" description="OBG-type G" evidence="1">
    <location>
        <begin position="162"/>
        <end position="328"/>
    </location>
</feature>
<feature type="region of interest" description="Disordered" evidence="3">
    <location>
        <begin position="360"/>
        <end position="382"/>
    </location>
</feature>
<feature type="binding site" evidence="1">
    <location>
        <begin position="168"/>
        <end position="175"/>
    </location>
    <ligand>
        <name>GTP</name>
        <dbReference type="ChEBI" id="CHEBI:37565"/>
    </ligand>
</feature>
<feature type="binding site" evidence="1">
    <location>
        <position position="175"/>
    </location>
    <ligand>
        <name>Mg(2+)</name>
        <dbReference type="ChEBI" id="CHEBI:18420"/>
    </ligand>
</feature>
<feature type="binding site" evidence="1">
    <location>
        <begin position="193"/>
        <end position="197"/>
    </location>
    <ligand>
        <name>GTP</name>
        <dbReference type="ChEBI" id="CHEBI:37565"/>
    </ligand>
</feature>
<feature type="binding site" evidence="1">
    <location>
        <position position="195"/>
    </location>
    <ligand>
        <name>Mg(2+)</name>
        <dbReference type="ChEBI" id="CHEBI:18420"/>
    </ligand>
</feature>
<feature type="binding site" evidence="1">
    <location>
        <begin position="215"/>
        <end position="218"/>
    </location>
    <ligand>
        <name>GTP</name>
        <dbReference type="ChEBI" id="CHEBI:37565"/>
    </ligand>
</feature>
<feature type="binding site" evidence="1">
    <location>
        <begin position="282"/>
        <end position="285"/>
    </location>
    <ligand>
        <name>GTP</name>
        <dbReference type="ChEBI" id="CHEBI:37565"/>
    </ligand>
</feature>
<feature type="binding site" evidence="1">
    <location>
        <begin position="309"/>
        <end position="311"/>
    </location>
    <ligand>
        <name>GTP</name>
        <dbReference type="ChEBI" id="CHEBI:37565"/>
    </ligand>
</feature>
<reference key="1">
    <citation type="journal article" date="2004" name="Proc. Natl. Acad. Sci. U.S.A.">
        <title>Comparison of the genome of the oral pathogen Treponema denticola with other spirochete genomes.</title>
        <authorList>
            <person name="Seshadri R."/>
            <person name="Myers G.S.A."/>
            <person name="Tettelin H."/>
            <person name="Eisen J.A."/>
            <person name="Heidelberg J.F."/>
            <person name="Dodson R.J."/>
            <person name="Davidsen T.M."/>
            <person name="DeBoy R.T."/>
            <person name="Fouts D.E."/>
            <person name="Haft D.H."/>
            <person name="Selengut J."/>
            <person name="Ren Q."/>
            <person name="Brinkac L.M."/>
            <person name="Madupu R."/>
            <person name="Kolonay J.F."/>
            <person name="Durkin S.A."/>
            <person name="Daugherty S.C."/>
            <person name="Shetty J."/>
            <person name="Shvartsbeyn A."/>
            <person name="Gebregeorgis E."/>
            <person name="Geer K."/>
            <person name="Tsegaye G."/>
            <person name="Malek J.A."/>
            <person name="Ayodeji B."/>
            <person name="Shatsman S."/>
            <person name="McLeod M.P."/>
            <person name="Smajs D."/>
            <person name="Howell J.K."/>
            <person name="Pal S."/>
            <person name="Amin A."/>
            <person name="Vashisth P."/>
            <person name="McNeill T.Z."/>
            <person name="Xiang Q."/>
            <person name="Sodergren E."/>
            <person name="Baca E."/>
            <person name="Weinstock G.M."/>
            <person name="Norris S.J."/>
            <person name="Fraser C.M."/>
            <person name="Paulsen I.T."/>
        </authorList>
    </citation>
    <scope>NUCLEOTIDE SEQUENCE [LARGE SCALE GENOMIC DNA]</scope>
    <source>
        <strain>ATCC 35405 / DSM 14222 / CIP 103919 / JCM 8153 / KCTC 15104</strain>
    </source>
</reference>
<keyword id="KW-0963">Cytoplasm</keyword>
<keyword id="KW-0342">GTP-binding</keyword>
<keyword id="KW-0378">Hydrolase</keyword>
<keyword id="KW-0460">Magnesium</keyword>
<keyword id="KW-0479">Metal-binding</keyword>
<keyword id="KW-0547">Nucleotide-binding</keyword>
<keyword id="KW-1185">Reference proteome</keyword>
<organism>
    <name type="scientific">Treponema denticola (strain ATCC 35405 / DSM 14222 / CIP 103919 / JCM 8153 / KCTC 15104)</name>
    <dbReference type="NCBI Taxonomy" id="243275"/>
    <lineage>
        <taxon>Bacteria</taxon>
        <taxon>Pseudomonadati</taxon>
        <taxon>Spirochaetota</taxon>
        <taxon>Spirochaetia</taxon>
        <taxon>Spirochaetales</taxon>
        <taxon>Treponemataceae</taxon>
        <taxon>Treponema</taxon>
    </lineage>
</organism>
<protein>
    <recommendedName>
        <fullName evidence="1">GTPase Obg</fullName>
        <ecNumber evidence="1">3.6.5.-</ecNumber>
    </recommendedName>
    <alternativeName>
        <fullName evidence="1">GTP-binding protein Obg</fullName>
    </alternativeName>
</protein>
<comment type="function">
    <text evidence="1">An essential GTPase which binds GTP, GDP and possibly (p)ppGpp with moderate affinity, with high nucleotide exchange rates and a fairly low GTP hydrolysis rate. Plays a role in control of the cell cycle, stress response, ribosome biogenesis and in those bacteria that undergo differentiation, in morphogenesis control.</text>
</comment>
<comment type="cofactor">
    <cofactor evidence="1">
        <name>Mg(2+)</name>
        <dbReference type="ChEBI" id="CHEBI:18420"/>
    </cofactor>
</comment>
<comment type="subunit">
    <text evidence="1">Monomer.</text>
</comment>
<comment type="subcellular location">
    <subcellularLocation>
        <location evidence="1">Cytoplasm</location>
    </subcellularLocation>
</comment>
<comment type="similarity">
    <text evidence="1">Belongs to the TRAFAC class OBG-HflX-like GTPase superfamily. OBG GTPase family.</text>
</comment>
<accession>Q73LW4</accession>
<gene>
    <name evidence="1" type="primary">obg</name>
    <name type="ordered locus">TDE_1748</name>
</gene>
<evidence type="ECO:0000255" key="1">
    <source>
        <dbReference type="HAMAP-Rule" id="MF_01454"/>
    </source>
</evidence>
<evidence type="ECO:0000255" key="2">
    <source>
        <dbReference type="PROSITE-ProRule" id="PRU01231"/>
    </source>
</evidence>
<evidence type="ECO:0000256" key="3">
    <source>
        <dbReference type="SAM" id="MobiDB-lite"/>
    </source>
</evidence>
<proteinExistence type="inferred from homology"/>
<name>OBG_TREDE</name>
<sequence length="382" mass="42209">MVKFADESKIRVSSGKGGNGCIAFRREKYVPMGGPSGGDGGRGGDLIFEIRRNMRTLVHLRHKRVYKAKNGGGGEGSQRFGKKGDDCIIPLPPGCVIKDPETGKTILDFGDAEEGRFVFLKGGNGGWGNCHFKTSTNQAPKTALPGQEGETREIIVELNIIADIGLVGFPNAGKSSLLDYFTNARPKIAPYPFTTKIPNLGVLRVDEERDVIIADIPGILEGASEGIGLGIRFLKHIARSAGLAFLIDLSDDNYLRAYDILCKELESYSKELAQKKRIIIATKLDLPDTKERFTELKNAIPDQEILGISLYNEWGLEEVKKAFIRLADEMQKTKPQKESLDPYGQNKNFMTAELDDVSYEEKNDDEHFGATVSLSRKRKPKK</sequence>
<dbReference type="EC" id="3.6.5.-" evidence="1"/>
<dbReference type="EMBL" id="AE017226">
    <property type="protein sequence ID" value="AAS12263.1"/>
    <property type="molecule type" value="Genomic_DNA"/>
</dbReference>
<dbReference type="RefSeq" id="NP_972352.1">
    <property type="nucleotide sequence ID" value="NC_002967.9"/>
</dbReference>
<dbReference type="SMR" id="Q73LW4"/>
<dbReference type="STRING" id="243275.TDE_1748"/>
<dbReference type="PaxDb" id="243275-TDE_1748"/>
<dbReference type="GeneID" id="2740593"/>
<dbReference type="KEGG" id="tde:TDE_1748"/>
<dbReference type="PATRIC" id="fig|243275.7.peg.1671"/>
<dbReference type="eggNOG" id="COG0536">
    <property type="taxonomic scope" value="Bacteria"/>
</dbReference>
<dbReference type="HOGENOM" id="CLU_011747_2_0_12"/>
<dbReference type="OrthoDB" id="9807318at2"/>
<dbReference type="Proteomes" id="UP000008212">
    <property type="component" value="Chromosome"/>
</dbReference>
<dbReference type="GO" id="GO:0005737">
    <property type="term" value="C:cytoplasm"/>
    <property type="evidence" value="ECO:0007669"/>
    <property type="project" value="UniProtKB-SubCell"/>
</dbReference>
<dbReference type="GO" id="GO:0005525">
    <property type="term" value="F:GTP binding"/>
    <property type="evidence" value="ECO:0007669"/>
    <property type="project" value="UniProtKB-UniRule"/>
</dbReference>
<dbReference type="GO" id="GO:0003924">
    <property type="term" value="F:GTPase activity"/>
    <property type="evidence" value="ECO:0007669"/>
    <property type="project" value="UniProtKB-UniRule"/>
</dbReference>
<dbReference type="GO" id="GO:0000287">
    <property type="term" value="F:magnesium ion binding"/>
    <property type="evidence" value="ECO:0007669"/>
    <property type="project" value="InterPro"/>
</dbReference>
<dbReference type="GO" id="GO:0042254">
    <property type="term" value="P:ribosome biogenesis"/>
    <property type="evidence" value="ECO:0007669"/>
    <property type="project" value="UniProtKB-UniRule"/>
</dbReference>
<dbReference type="CDD" id="cd01898">
    <property type="entry name" value="Obg"/>
    <property type="match status" value="1"/>
</dbReference>
<dbReference type="FunFam" id="2.70.210.12:FF:000001">
    <property type="entry name" value="GTPase Obg"/>
    <property type="match status" value="1"/>
</dbReference>
<dbReference type="Gene3D" id="2.70.210.12">
    <property type="entry name" value="GTP1/OBG domain"/>
    <property type="match status" value="1"/>
</dbReference>
<dbReference type="Gene3D" id="3.40.50.300">
    <property type="entry name" value="P-loop containing nucleotide triphosphate hydrolases"/>
    <property type="match status" value="1"/>
</dbReference>
<dbReference type="HAMAP" id="MF_01454">
    <property type="entry name" value="GTPase_Obg"/>
    <property type="match status" value="1"/>
</dbReference>
<dbReference type="InterPro" id="IPR031167">
    <property type="entry name" value="G_OBG"/>
</dbReference>
<dbReference type="InterPro" id="IPR006073">
    <property type="entry name" value="GTP-bd"/>
</dbReference>
<dbReference type="InterPro" id="IPR014100">
    <property type="entry name" value="GTP-bd_Obg/CgtA"/>
</dbReference>
<dbReference type="InterPro" id="IPR006074">
    <property type="entry name" value="GTP1-OBG_CS"/>
</dbReference>
<dbReference type="InterPro" id="IPR006169">
    <property type="entry name" value="GTP1_OBG_dom"/>
</dbReference>
<dbReference type="InterPro" id="IPR036726">
    <property type="entry name" value="GTP1_OBG_dom_sf"/>
</dbReference>
<dbReference type="InterPro" id="IPR045086">
    <property type="entry name" value="OBG_GTPase"/>
</dbReference>
<dbReference type="InterPro" id="IPR027417">
    <property type="entry name" value="P-loop_NTPase"/>
</dbReference>
<dbReference type="NCBIfam" id="TIGR02729">
    <property type="entry name" value="Obg_CgtA"/>
    <property type="match status" value="1"/>
</dbReference>
<dbReference type="NCBIfam" id="NF008955">
    <property type="entry name" value="PRK12297.1"/>
    <property type="match status" value="1"/>
</dbReference>
<dbReference type="NCBIfam" id="NF008956">
    <property type="entry name" value="PRK12299.1"/>
    <property type="match status" value="1"/>
</dbReference>
<dbReference type="PANTHER" id="PTHR11702">
    <property type="entry name" value="DEVELOPMENTALLY REGULATED GTP-BINDING PROTEIN-RELATED"/>
    <property type="match status" value="1"/>
</dbReference>
<dbReference type="PANTHER" id="PTHR11702:SF31">
    <property type="entry name" value="MITOCHONDRIAL RIBOSOME-ASSOCIATED GTPASE 2"/>
    <property type="match status" value="1"/>
</dbReference>
<dbReference type="Pfam" id="PF01018">
    <property type="entry name" value="GTP1_OBG"/>
    <property type="match status" value="1"/>
</dbReference>
<dbReference type="Pfam" id="PF01926">
    <property type="entry name" value="MMR_HSR1"/>
    <property type="match status" value="1"/>
</dbReference>
<dbReference type="PIRSF" id="PIRSF002401">
    <property type="entry name" value="GTP_bd_Obg/CgtA"/>
    <property type="match status" value="1"/>
</dbReference>
<dbReference type="PRINTS" id="PR00326">
    <property type="entry name" value="GTP1OBG"/>
</dbReference>
<dbReference type="SUPFAM" id="SSF82051">
    <property type="entry name" value="Obg GTP-binding protein N-terminal domain"/>
    <property type="match status" value="1"/>
</dbReference>
<dbReference type="SUPFAM" id="SSF52540">
    <property type="entry name" value="P-loop containing nucleoside triphosphate hydrolases"/>
    <property type="match status" value="1"/>
</dbReference>
<dbReference type="PROSITE" id="PS51710">
    <property type="entry name" value="G_OBG"/>
    <property type="match status" value="1"/>
</dbReference>
<dbReference type="PROSITE" id="PS00905">
    <property type="entry name" value="GTP1_OBG"/>
    <property type="match status" value="1"/>
</dbReference>
<dbReference type="PROSITE" id="PS51883">
    <property type="entry name" value="OBG"/>
    <property type="match status" value="1"/>
</dbReference>